<sequence length="181" mass="21449">MMNISGPREGDFITIKSYKHDGSLHRTWRDTMVLKTSENALIGCNDHTLVTESDGRRWITREPALVYFHKHYWFNIVTMIRENGVSYYCNLASPAVLDKEALKYIDYDLDVKVFPNGEKRLLDVDEYEDHGNKWHYSADIDKILKHNVRVLVDWINNGKGPFSKEYVEIWYNRYLELSRQQ</sequence>
<reference key="1">
    <citation type="journal article" date="2006" name="Proc. Natl. Acad. Sci. U.S.A.">
        <title>Multireplicon genome architecture of Lactobacillus salivarius.</title>
        <authorList>
            <person name="Claesson M.J."/>
            <person name="Li Y."/>
            <person name="Leahy S."/>
            <person name="Canchaya C."/>
            <person name="van Pijkeren J.P."/>
            <person name="Cerdeno-Tarraga A.M."/>
            <person name="Parkhill J."/>
            <person name="Flynn S."/>
            <person name="O'Sullivan G.C."/>
            <person name="Collins J.K."/>
            <person name="Higgins D."/>
            <person name="Shanahan F."/>
            <person name="Fitzgerald G.F."/>
            <person name="van Sinderen D."/>
            <person name="O'Toole P.W."/>
        </authorList>
    </citation>
    <scope>NUCLEOTIDE SEQUENCE [LARGE SCALE GENOMIC DNA]</scope>
    <source>
        <strain>UCC118</strain>
    </source>
</reference>
<proteinExistence type="inferred from homology"/>
<protein>
    <recommendedName>
        <fullName evidence="1">Nucleoside triphosphate/diphosphate phosphatase</fullName>
        <ecNumber evidence="1">3.6.1.15</ecNumber>
        <ecNumber evidence="1">3.6.1.6</ecNumber>
    </recommendedName>
</protein>
<keyword id="KW-0378">Hydrolase</keyword>
<keyword id="KW-0460">Magnesium</keyword>
<keyword id="KW-0479">Metal-binding</keyword>
<keyword id="KW-1185">Reference proteome</keyword>
<accession>Q1WV02</accession>
<evidence type="ECO:0000255" key="1">
    <source>
        <dbReference type="HAMAP-Rule" id="MF_01568"/>
    </source>
</evidence>
<feature type="chain" id="PRO_0000248098" description="Nucleoside triphosphate/diphosphate phosphatase">
    <location>
        <begin position="1"/>
        <end position="181"/>
    </location>
</feature>
<feature type="active site" description="Proton donor" evidence="1">
    <location>
        <position position="26"/>
    </location>
</feature>
<feature type="binding site" evidence="1">
    <location>
        <position position="90"/>
    </location>
    <ligand>
        <name>Mg(2+)</name>
        <dbReference type="ChEBI" id="CHEBI:18420"/>
        <label>1</label>
    </ligand>
</feature>
<feature type="binding site" evidence="1">
    <location>
        <position position="106"/>
    </location>
    <ligand>
        <name>Mg(2+)</name>
        <dbReference type="ChEBI" id="CHEBI:18420"/>
        <label>1</label>
    </ligand>
</feature>
<feature type="binding site" evidence="1">
    <location>
        <position position="108"/>
    </location>
    <ligand>
        <name>Mg(2+)</name>
        <dbReference type="ChEBI" id="CHEBI:18420"/>
        <label>2</label>
    </ligand>
</feature>
<feature type="binding site" evidence="1">
    <location>
        <position position="110"/>
    </location>
    <ligand>
        <name>Mg(2+)</name>
        <dbReference type="ChEBI" id="CHEBI:18420"/>
        <label>1</label>
    </ligand>
</feature>
<feature type="binding site" evidence="1">
    <location>
        <position position="110"/>
    </location>
    <ligand>
        <name>Mg(2+)</name>
        <dbReference type="ChEBI" id="CHEBI:18420"/>
        <label>2</label>
    </ligand>
</feature>
<feature type="binding site" evidence="1">
    <location>
        <position position="123"/>
    </location>
    <ligand>
        <name>Mg(2+)</name>
        <dbReference type="ChEBI" id="CHEBI:18420"/>
        <label>2</label>
    </ligand>
</feature>
<feature type="binding site" evidence="1">
    <location>
        <position position="126"/>
    </location>
    <ligand>
        <name>Mg(2+)</name>
        <dbReference type="ChEBI" id="CHEBI:18420"/>
        <label>2</label>
    </ligand>
</feature>
<dbReference type="EC" id="3.6.1.15" evidence="1"/>
<dbReference type="EC" id="3.6.1.6" evidence="1"/>
<dbReference type="EMBL" id="CP000233">
    <property type="protein sequence ID" value="ABD99183.1"/>
    <property type="molecule type" value="Genomic_DNA"/>
</dbReference>
<dbReference type="RefSeq" id="WP_003710725.1">
    <property type="nucleotide sequence ID" value="NC_007929.1"/>
</dbReference>
<dbReference type="RefSeq" id="YP_535266.1">
    <property type="nucleotide sequence ID" value="NC_007929.1"/>
</dbReference>
<dbReference type="SMR" id="Q1WV02"/>
<dbReference type="STRING" id="362948.LSL_0370"/>
<dbReference type="KEGG" id="lsl:LSL_0370"/>
<dbReference type="PATRIC" id="fig|362948.14.peg.446"/>
<dbReference type="HOGENOM" id="CLU_109787_1_0_9"/>
<dbReference type="OrthoDB" id="1645325at2"/>
<dbReference type="Proteomes" id="UP000006559">
    <property type="component" value="Chromosome"/>
</dbReference>
<dbReference type="GO" id="GO:0000287">
    <property type="term" value="F:magnesium ion binding"/>
    <property type="evidence" value="ECO:0007669"/>
    <property type="project" value="UniProtKB-UniRule"/>
</dbReference>
<dbReference type="GO" id="GO:0017110">
    <property type="term" value="F:nucleoside diphosphate phosphatase activity"/>
    <property type="evidence" value="ECO:0007669"/>
    <property type="project" value="UniProtKB-UniRule"/>
</dbReference>
<dbReference type="GO" id="GO:0017111">
    <property type="term" value="F:ribonucleoside triphosphate phosphatase activity"/>
    <property type="evidence" value="ECO:0007669"/>
    <property type="project" value="UniProtKB-UniRule"/>
</dbReference>
<dbReference type="Gene3D" id="2.40.380.10">
    <property type="entry name" value="FomD-like"/>
    <property type="match status" value="1"/>
</dbReference>
<dbReference type="HAMAP" id="MF_01568">
    <property type="entry name" value="Ntdp"/>
    <property type="match status" value="1"/>
</dbReference>
<dbReference type="InterPro" id="IPR007295">
    <property type="entry name" value="DUF402"/>
</dbReference>
<dbReference type="InterPro" id="IPR035930">
    <property type="entry name" value="FomD-like_sf"/>
</dbReference>
<dbReference type="InterPro" id="IPR050212">
    <property type="entry name" value="Ntdp-like"/>
</dbReference>
<dbReference type="InterPro" id="IPR016882">
    <property type="entry name" value="SA1684"/>
</dbReference>
<dbReference type="NCBIfam" id="NF010183">
    <property type="entry name" value="PRK13662.1"/>
    <property type="match status" value="1"/>
</dbReference>
<dbReference type="PANTHER" id="PTHR39159">
    <property type="match status" value="1"/>
</dbReference>
<dbReference type="PANTHER" id="PTHR39159:SF1">
    <property type="entry name" value="UPF0374 PROTEIN YGAC"/>
    <property type="match status" value="1"/>
</dbReference>
<dbReference type="Pfam" id="PF04167">
    <property type="entry name" value="DUF402"/>
    <property type="match status" value="1"/>
</dbReference>
<dbReference type="PIRSF" id="PIRSF028345">
    <property type="entry name" value="UCP028345"/>
    <property type="match status" value="1"/>
</dbReference>
<dbReference type="SUPFAM" id="SSF159234">
    <property type="entry name" value="FomD-like"/>
    <property type="match status" value="1"/>
</dbReference>
<name>NTDP_LIGS1</name>
<organism>
    <name type="scientific">Ligilactobacillus salivarius (strain UCC118)</name>
    <name type="common">Lactobacillus salivarius</name>
    <dbReference type="NCBI Taxonomy" id="362948"/>
    <lineage>
        <taxon>Bacteria</taxon>
        <taxon>Bacillati</taxon>
        <taxon>Bacillota</taxon>
        <taxon>Bacilli</taxon>
        <taxon>Lactobacillales</taxon>
        <taxon>Lactobacillaceae</taxon>
        <taxon>Ligilactobacillus</taxon>
    </lineage>
</organism>
<comment type="function">
    <text evidence="1">Has nucleoside phosphatase activity towards nucleoside triphosphates and nucleoside diphosphates.</text>
</comment>
<comment type="catalytic activity">
    <reaction evidence="1">
        <text>a ribonucleoside 5'-triphosphate + H2O = a ribonucleoside 5'-diphosphate + phosphate + H(+)</text>
        <dbReference type="Rhea" id="RHEA:23680"/>
        <dbReference type="ChEBI" id="CHEBI:15377"/>
        <dbReference type="ChEBI" id="CHEBI:15378"/>
        <dbReference type="ChEBI" id="CHEBI:43474"/>
        <dbReference type="ChEBI" id="CHEBI:57930"/>
        <dbReference type="ChEBI" id="CHEBI:61557"/>
        <dbReference type="EC" id="3.6.1.15"/>
    </reaction>
</comment>
<comment type="catalytic activity">
    <reaction evidence="1">
        <text>a ribonucleoside 5'-diphosphate + H2O = a ribonucleoside 5'-phosphate + phosphate + H(+)</text>
        <dbReference type="Rhea" id="RHEA:36799"/>
        <dbReference type="ChEBI" id="CHEBI:15377"/>
        <dbReference type="ChEBI" id="CHEBI:15378"/>
        <dbReference type="ChEBI" id="CHEBI:43474"/>
        <dbReference type="ChEBI" id="CHEBI:57930"/>
        <dbReference type="ChEBI" id="CHEBI:58043"/>
        <dbReference type="EC" id="3.6.1.6"/>
    </reaction>
</comment>
<comment type="cofactor">
    <cofactor evidence="1">
        <name>Mg(2+)</name>
        <dbReference type="ChEBI" id="CHEBI:18420"/>
    </cofactor>
</comment>
<comment type="similarity">
    <text evidence="1">Belongs to the Ntdp family.</text>
</comment>
<gene>
    <name type="ordered locus">LSL_0370</name>
</gene>